<proteinExistence type="inferred from homology"/>
<feature type="chain" id="PRO_1000063696" description="UPF0213 protein M28_Spy1146">
    <location>
        <begin position="1"/>
        <end position="92"/>
    </location>
</feature>
<feature type="domain" description="GIY-YIG" evidence="1">
    <location>
        <begin position="4"/>
        <end position="80"/>
    </location>
</feature>
<organism>
    <name type="scientific">Streptococcus pyogenes serotype M28 (strain MGAS6180)</name>
    <dbReference type="NCBI Taxonomy" id="319701"/>
    <lineage>
        <taxon>Bacteria</taxon>
        <taxon>Bacillati</taxon>
        <taxon>Bacillota</taxon>
        <taxon>Bacilli</taxon>
        <taxon>Lactobacillales</taxon>
        <taxon>Streptococcaceae</taxon>
        <taxon>Streptococcus</taxon>
    </lineage>
</organism>
<accession>Q48SQ4</accession>
<gene>
    <name type="ordered locus">M28_Spy1146</name>
</gene>
<protein>
    <recommendedName>
        <fullName>UPF0213 protein M28_Spy1146</fullName>
    </recommendedName>
</protein>
<sequence>MTTKKAYMYVLECADKTLYTGYTTDLKKRLATHNAGKGAKYTRYRLPVSLLYYEVFDSKEAAMSAEALFKKRKTRSQKLAYIATHQKEKKNH</sequence>
<comment type="similarity">
    <text evidence="2">Belongs to the UPF0213 family.</text>
</comment>
<dbReference type="EMBL" id="CP000056">
    <property type="protein sequence ID" value="AAX72256.1"/>
    <property type="molecule type" value="Genomic_DNA"/>
</dbReference>
<dbReference type="RefSeq" id="WP_011017953.1">
    <property type="nucleotide sequence ID" value="NC_007296.2"/>
</dbReference>
<dbReference type="SMR" id="Q48SQ4"/>
<dbReference type="KEGG" id="spb:M28_Spy1146"/>
<dbReference type="HOGENOM" id="CLU_135650_0_3_9"/>
<dbReference type="CDD" id="cd10456">
    <property type="entry name" value="GIY-YIG_UPF0213"/>
    <property type="match status" value="1"/>
</dbReference>
<dbReference type="Gene3D" id="3.40.1440.10">
    <property type="entry name" value="GIY-YIG endonuclease"/>
    <property type="match status" value="1"/>
</dbReference>
<dbReference type="InterPro" id="IPR000305">
    <property type="entry name" value="GIY-YIG_endonuc"/>
</dbReference>
<dbReference type="InterPro" id="IPR035901">
    <property type="entry name" value="GIY-YIG_endonuc_sf"/>
</dbReference>
<dbReference type="InterPro" id="IPR050190">
    <property type="entry name" value="UPF0213_domain"/>
</dbReference>
<dbReference type="PANTHER" id="PTHR34477">
    <property type="entry name" value="UPF0213 PROTEIN YHBQ"/>
    <property type="match status" value="1"/>
</dbReference>
<dbReference type="PANTHER" id="PTHR34477:SF1">
    <property type="entry name" value="UPF0213 PROTEIN YHBQ"/>
    <property type="match status" value="1"/>
</dbReference>
<dbReference type="Pfam" id="PF01541">
    <property type="entry name" value="GIY-YIG"/>
    <property type="match status" value="1"/>
</dbReference>
<dbReference type="SUPFAM" id="SSF82771">
    <property type="entry name" value="GIY-YIG endonuclease"/>
    <property type="match status" value="1"/>
</dbReference>
<dbReference type="PROSITE" id="PS50164">
    <property type="entry name" value="GIY_YIG"/>
    <property type="match status" value="1"/>
</dbReference>
<reference key="1">
    <citation type="journal article" date="2005" name="J. Infect. Dis.">
        <title>Genome sequence of a serotype M28 strain of group A Streptococcus: potential new insights into puerperal sepsis and bacterial disease specificity.</title>
        <authorList>
            <person name="Green N.M."/>
            <person name="Zhang S."/>
            <person name="Porcella S.F."/>
            <person name="Nagiec M.J."/>
            <person name="Barbian K.D."/>
            <person name="Beres S.B."/>
            <person name="Lefebvre R.B."/>
            <person name="Musser J.M."/>
        </authorList>
    </citation>
    <scope>NUCLEOTIDE SEQUENCE [LARGE SCALE GENOMIC DNA]</scope>
    <source>
        <strain>MGAS6180</strain>
    </source>
</reference>
<name>Y1146_STRPM</name>
<evidence type="ECO:0000255" key="1">
    <source>
        <dbReference type="PROSITE-ProRule" id="PRU00977"/>
    </source>
</evidence>
<evidence type="ECO:0000305" key="2"/>